<gene>
    <name evidence="1" type="primary">tolB</name>
    <name type="ordered locus">Bcen_0317</name>
</gene>
<evidence type="ECO:0000255" key="1">
    <source>
        <dbReference type="HAMAP-Rule" id="MF_00671"/>
    </source>
</evidence>
<evidence type="ECO:0000256" key="2">
    <source>
        <dbReference type="SAM" id="MobiDB-lite"/>
    </source>
</evidence>
<protein>
    <recommendedName>
        <fullName evidence="1">Tol-Pal system protein TolB</fullName>
    </recommendedName>
</protein>
<keyword id="KW-0131">Cell cycle</keyword>
<keyword id="KW-0132">Cell division</keyword>
<keyword id="KW-0574">Periplasm</keyword>
<keyword id="KW-0732">Signal</keyword>
<dbReference type="EMBL" id="CP000378">
    <property type="protein sequence ID" value="ABF75229.1"/>
    <property type="molecule type" value="Genomic_DNA"/>
</dbReference>
<dbReference type="SMR" id="Q1BYS6"/>
<dbReference type="HOGENOM" id="CLU_047123_0_0_4"/>
<dbReference type="GO" id="GO:0042597">
    <property type="term" value="C:periplasmic space"/>
    <property type="evidence" value="ECO:0007669"/>
    <property type="project" value="UniProtKB-SubCell"/>
</dbReference>
<dbReference type="GO" id="GO:0051301">
    <property type="term" value="P:cell division"/>
    <property type="evidence" value="ECO:0007669"/>
    <property type="project" value="UniProtKB-UniRule"/>
</dbReference>
<dbReference type="GO" id="GO:0017038">
    <property type="term" value="P:protein import"/>
    <property type="evidence" value="ECO:0007669"/>
    <property type="project" value="InterPro"/>
</dbReference>
<dbReference type="Gene3D" id="2.120.10.30">
    <property type="entry name" value="TolB, C-terminal domain"/>
    <property type="match status" value="1"/>
</dbReference>
<dbReference type="Gene3D" id="3.40.50.10070">
    <property type="entry name" value="TolB, N-terminal domain"/>
    <property type="match status" value="1"/>
</dbReference>
<dbReference type="HAMAP" id="MF_00671">
    <property type="entry name" value="TolB"/>
    <property type="match status" value="1"/>
</dbReference>
<dbReference type="InterPro" id="IPR011042">
    <property type="entry name" value="6-blade_b-propeller_TolB-like"/>
</dbReference>
<dbReference type="InterPro" id="IPR011659">
    <property type="entry name" value="PD40"/>
</dbReference>
<dbReference type="InterPro" id="IPR014167">
    <property type="entry name" value="Tol-Pal_TolB"/>
</dbReference>
<dbReference type="InterPro" id="IPR007195">
    <property type="entry name" value="TolB_N"/>
</dbReference>
<dbReference type="NCBIfam" id="TIGR02800">
    <property type="entry name" value="propeller_TolB"/>
    <property type="match status" value="1"/>
</dbReference>
<dbReference type="PANTHER" id="PTHR36842:SF1">
    <property type="entry name" value="PROTEIN TOLB"/>
    <property type="match status" value="1"/>
</dbReference>
<dbReference type="PANTHER" id="PTHR36842">
    <property type="entry name" value="PROTEIN TOLB HOMOLOG"/>
    <property type="match status" value="1"/>
</dbReference>
<dbReference type="Pfam" id="PF07676">
    <property type="entry name" value="PD40"/>
    <property type="match status" value="5"/>
</dbReference>
<dbReference type="Pfam" id="PF04052">
    <property type="entry name" value="TolB_N"/>
    <property type="match status" value="1"/>
</dbReference>
<dbReference type="SUPFAM" id="SSF52964">
    <property type="entry name" value="TolB, N-terminal domain"/>
    <property type="match status" value="1"/>
</dbReference>
<dbReference type="SUPFAM" id="SSF69304">
    <property type="entry name" value="Tricorn protease N-terminal domain"/>
    <property type="match status" value="1"/>
</dbReference>
<organism>
    <name type="scientific">Burkholderia orbicola (strain AU 1054)</name>
    <dbReference type="NCBI Taxonomy" id="331271"/>
    <lineage>
        <taxon>Bacteria</taxon>
        <taxon>Pseudomonadati</taxon>
        <taxon>Pseudomonadota</taxon>
        <taxon>Betaproteobacteria</taxon>
        <taxon>Burkholderiales</taxon>
        <taxon>Burkholderiaceae</taxon>
        <taxon>Burkholderia</taxon>
        <taxon>Burkholderia cepacia complex</taxon>
        <taxon>Burkholderia orbicola</taxon>
    </lineage>
</organism>
<accession>Q1BYS6</accession>
<comment type="function">
    <text evidence="1">Part of the Tol-Pal system, which plays a role in outer membrane invagination during cell division and is important for maintaining outer membrane integrity.</text>
</comment>
<comment type="subunit">
    <text evidence="1">The Tol-Pal system is composed of five core proteins: the inner membrane proteins TolA, TolQ and TolR, the periplasmic protein TolB and the outer membrane protein Pal. They form a network linking the inner and outer membranes and the peptidoglycan layer.</text>
</comment>
<comment type="subcellular location">
    <subcellularLocation>
        <location evidence="1">Periplasm</location>
    </subcellularLocation>
</comment>
<comment type="similarity">
    <text evidence="1">Belongs to the TolB family.</text>
</comment>
<reference key="1">
    <citation type="submission" date="2006-05" db="EMBL/GenBank/DDBJ databases">
        <title>Complete sequence of chromosome 1 of Burkholderia cenocepacia AU 1054.</title>
        <authorList>
            <consortium name="US DOE Joint Genome Institute"/>
            <person name="Copeland A."/>
            <person name="Lucas S."/>
            <person name="Lapidus A."/>
            <person name="Barry K."/>
            <person name="Detter J.C."/>
            <person name="Glavina del Rio T."/>
            <person name="Hammon N."/>
            <person name="Israni S."/>
            <person name="Dalin E."/>
            <person name="Tice H."/>
            <person name="Pitluck S."/>
            <person name="Chain P."/>
            <person name="Malfatti S."/>
            <person name="Shin M."/>
            <person name="Vergez L."/>
            <person name="Schmutz J."/>
            <person name="Larimer F."/>
            <person name="Land M."/>
            <person name="Hauser L."/>
            <person name="Kyrpides N."/>
            <person name="Lykidis A."/>
            <person name="LiPuma J.J."/>
            <person name="Konstantinidis K."/>
            <person name="Tiedje J.M."/>
            <person name="Richardson P."/>
        </authorList>
    </citation>
    <scope>NUCLEOTIDE SEQUENCE [LARGE SCALE GENOMIC DNA]</scope>
    <source>
        <strain>AU 1054</strain>
    </source>
</reference>
<proteinExistence type="inferred from homology"/>
<feature type="signal peptide" evidence="1">
    <location>
        <begin position="1"/>
        <end position="26"/>
    </location>
</feature>
<feature type="chain" id="PRO_0000259034" description="Tol-Pal system protein TolB" evidence="1">
    <location>
        <begin position="27"/>
        <end position="431"/>
    </location>
</feature>
<feature type="region of interest" description="Disordered" evidence="2">
    <location>
        <begin position="406"/>
        <end position="431"/>
    </location>
</feature>
<name>TOLB_BURO1</name>
<sequence>MSLMTKLGFRALVASCLITAGSAANAQVNVLITGVGSTQFPIATANFTNEANLPQQVTSIVRADLARSGKFTNIDAGSTPVPETASVDLGAWKAKGANAFVAGSVNRDANGQYKVNFILYDTVKQQSLGGLSLTATDTTLRTAGHKIADYIYQKLLGVRGVFATRLSYVIKTGNRYQLQISDSDGQNARIALSSTEPIISPAWSPSSTKVAYVSFERKKPIVYIHDLPTGRRYMVSDQKGNNSAPAWSPDSNTLAVALSLTGNTQIYTVNANGGGLRRLTQSSSIDTEPFYSPDGRWIYFTSDRGGAPQIYRMPAQGESAGAAQRVTFTGSYNTSPRVSPDGKLLAYISRTGGGFKLYVQDLQTGAANAITNTNRDESPSFAANGQYVLYATQSGGRNVLAAVPSDGSAPPQILSVQGGSVREPSWGPFMQ</sequence>